<comment type="subcellular location">
    <subcellularLocation>
        <location evidence="3">Membrane</location>
        <topology evidence="3">Multi-pass membrane protein</topology>
    </subcellularLocation>
</comment>
<comment type="similarity">
    <text evidence="3">Belongs to the AIM11 family.</text>
</comment>
<dbReference type="EMBL" id="CR382132">
    <property type="protein sequence ID" value="CAG78558.1"/>
    <property type="molecule type" value="Genomic_DNA"/>
</dbReference>
<dbReference type="RefSeq" id="XP_505747.1">
    <property type="nucleotide sequence ID" value="XM_505747.1"/>
</dbReference>
<dbReference type="SMR" id="Q6C0R5"/>
<dbReference type="FunCoup" id="Q6C0R5">
    <property type="interactions" value="22"/>
</dbReference>
<dbReference type="EnsemblFungi" id="CAG78558">
    <property type="protein sequence ID" value="CAG78558"/>
    <property type="gene ID" value="YALI0_F22367g"/>
</dbReference>
<dbReference type="KEGG" id="yli:2908818"/>
<dbReference type="VEuPathDB" id="FungiDB:YALI0_F22367g"/>
<dbReference type="HOGENOM" id="CLU_118700_0_0_1"/>
<dbReference type="InParanoid" id="Q6C0R5"/>
<dbReference type="OMA" id="RFAYKST"/>
<dbReference type="OrthoDB" id="118613at4891"/>
<dbReference type="Proteomes" id="UP000001300">
    <property type="component" value="Chromosome F"/>
</dbReference>
<dbReference type="GO" id="GO:0016020">
    <property type="term" value="C:membrane"/>
    <property type="evidence" value="ECO:0007669"/>
    <property type="project" value="UniProtKB-SubCell"/>
</dbReference>
<dbReference type="InterPro" id="IPR038814">
    <property type="entry name" value="AIM11"/>
</dbReference>
<dbReference type="PANTHER" id="PTHR39136">
    <property type="entry name" value="ALTERED INHERITANCE OF MITOCHONDRIA PROTEIN 11"/>
    <property type="match status" value="1"/>
</dbReference>
<dbReference type="PANTHER" id="PTHR39136:SF1">
    <property type="entry name" value="ALTERED INHERITANCE OF MITOCHONDRIA PROTEIN 11"/>
    <property type="match status" value="1"/>
</dbReference>
<proteinExistence type="inferred from homology"/>
<evidence type="ECO:0000255" key="1"/>
<evidence type="ECO:0000256" key="2">
    <source>
        <dbReference type="SAM" id="MobiDB-lite"/>
    </source>
</evidence>
<evidence type="ECO:0000305" key="3"/>
<sequence length="158" mass="17411">MKFRFGEGAEGTLNTSVTTAMIDQEKRAADLKRRKNQMLLFGGATLATLASCRLTARGISSRRYIPKMFQANHMPPQSDMVKEAAMAVVFATTMALSSFSMVVFGVAWSQDVTSLKQFALKMKTKLGAQQIEDEIRNAPMTPETQDLQDQLAGALKKD</sequence>
<accession>Q6C0R5</accession>
<name>AIM11_YARLI</name>
<feature type="chain" id="PRO_0000405659" description="Altered inheritance of mitochondria protein 11">
    <location>
        <begin position="1"/>
        <end position="158"/>
    </location>
</feature>
<feature type="transmembrane region" description="Helical" evidence="1">
    <location>
        <begin position="38"/>
        <end position="60"/>
    </location>
</feature>
<feature type="transmembrane region" description="Helical" evidence="1">
    <location>
        <begin position="84"/>
        <end position="106"/>
    </location>
</feature>
<feature type="region of interest" description="Disordered" evidence="2">
    <location>
        <begin position="136"/>
        <end position="158"/>
    </location>
</feature>
<organism>
    <name type="scientific">Yarrowia lipolytica (strain CLIB 122 / E 150)</name>
    <name type="common">Yeast</name>
    <name type="synonym">Candida lipolytica</name>
    <dbReference type="NCBI Taxonomy" id="284591"/>
    <lineage>
        <taxon>Eukaryota</taxon>
        <taxon>Fungi</taxon>
        <taxon>Dikarya</taxon>
        <taxon>Ascomycota</taxon>
        <taxon>Saccharomycotina</taxon>
        <taxon>Dipodascomycetes</taxon>
        <taxon>Dipodascales</taxon>
        <taxon>Dipodascales incertae sedis</taxon>
        <taxon>Yarrowia</taxon>
    </lineage>
</organism>
<protein>
    <recommendedName>
        <fullName>Altered inheritance of mitochondria protein 11</fullName>
    </recommendedName>
</protein>
<reference key="1">
    <citation type="journal article" date="2004" name="Nature">
        <title>Genome evolution in yeasts.</title>
        <authorList>
            <person name="Dujon B."/>
            <person name="Sherman D."/>
            <person name="Fischer G."/>
            <person name="Durrens P."/>
            <person name="Casaregola S."/>
            <person name="Lafontaine I."/>
            <person name="de Montigny J."/>
            <person name="Marck C."/>
            <person name="Neuveglise C."/>
            <person name="Talla E."/>
            <person name="Goffard N."/>
            <person name="Frangeul L."/>
            <person name="Aigle M."/>
            <person name="Anthouard V."/>
            <person name="Babour A."/>
            <person name="Barbe V."/>
            <person name="Barnay S."/>
            <person name="Blanchin S."/>
            <person name="Beckerich J.-M."/>
            <person name="Beyne E."/>
            <person name="Bleykasten C."/>
            <person name="Boisrame A."/>
            <person name="Boyer J."/>
            <person name="Cattolico L."/>
            <person name="Confanioleri F."/>
            <person name="de Daruvar A."/>
            <person name="Despons L."/>
            <person name="Fabre E."/>
            <person name="Fairhead C."/>
            <person name="Ferry-Dumazet H."/>
            <person name="Groppi A."/>
            <person name="Hantraye F."/>
            <person name="Hennequin C."/>
            <person name="Jauniaux N."/>
            <person name="Joyet P."/>
            <person name="Kachouri R."/>
            <person name="Kerrest A."/>
            <person name="Koszul R."/>
            <person name="Lemaire M."/>
            <person name="Lesur I."/>
            <person name="Ma L."/>
            <person name="Muller H."/>
            <person name="Nicaud J.-M."/>
            <person name="Nikolski M."/>
            <person name="Oztas S."/>
            <person name="Ozier-Kalogeropoulos O."/>
            <person name="Pellenz S."/>
            <person name="Potier S."/>
            <person name="Richard G.-F."/>
            <person name="Straub M.-L."/>
            <person name="Suleau A."/>
            <person name="Swennen D."/>
            <person name="Tekaia F."/>
            <person name="Wesolowski-Louvel M."/>
            <person name="Westhof E."/>
            <person name="Wirth B."/>
            <person name="Zeniou-Meyer M."/>
            <person name="Zivanovic Y."/>
            <person name="Bolotin-Fukuhara M."/>
            <person name="Thierry A."/>
            <person name="Bouchier C."/>
            <person name="Caudron B."/>
            <person name="Scarpelli C."/>
            <person name="Gaillardin C."/>
            <person name="Weissenbach J."/>
            <person name="Wincker P."/>
            <person name="Souciet J.-L."/>
        </authorList>
    </citation>
    <scope>NUCLEOTIDE SEQUENCE [LARGE SCALE GENOMIC DNA]</scope>
    <source>
        <strain>CLIB 122 / E 150</strain>
    </source>
</reference>
<gene>
    <name type="primary">AIM11</name>
    <name type="ordered locus">YALI0F22367g</name>
</gene>
<keyword id="KW-0472">Membrane</keyword>
<keyword id="KW-1185">Reference proteome</keyword>
<keyword id="KW-0812">Transmembrane</keyword>
<keyword id="KW-1133">Transmembrane helix</keyword>